<reference key="1">
    <citation type="journal article" date="1996" name="Science">
        <title>Complete genome sequence of the methanogenic archaeon, Methanococcus jannaschii.</title>
        <authorList>
            <person name="Bult C.J."/>
            <person name="White O."/>
            <person name="Olsen G.J."/>
            <person name="Zhou L."/>
            <person name="Fleischmann R.D."/>
            <person name="Sutton G.G."/>
            <person name="Blake J.A."/>
            <person name="FitzGerald L.M."/>
            <person name="Clayton R.A."/>
            <person name="Gocayne J.D."/>
            <person name="Kerlavage A.R."/>
            <person name="Dougherty B.A."/>
            <person name="Tomb J.-F."/>
            <person name="Adams M.D."/>
            <person name="Reich C.I."/>
            <person name="Overbeek R."/>
            <person name="Kirkness E.F."/>
            <person name="Weinstock K.G."/>
            <person name="Merrick J.M."/>
            <person name="Glodek A."/>
            <person name="Scott J.L."/>
            <person name="Geoghagen N.S.M."/>
            <person name="Weidman J.F."/>
            <person name="Fuhrmann J.L."/>
            <person name="Nguyen D."/>
            <person name="Utterback T.R."/>
            <person name="Kelley J.M."/>
            <person name="Peterson J.D."/>
            <person name="Sadow P.W."/>
            <person name="Hanna M.C."/>
            <person name="Cotton M.D."/>
            <person name="Roberts K.M."/>
            <person name="Hurst M.A."/>
            <person name="Kaine B.P."/>
            <person name="Borodovsky M."/>
            <person name="Klenk H.-P."/>
            <person name="Fraser C.M."/>
            <person name="Smith H.O."/>
            <person name="Woese C.R."/>
            <person name="Venter J.C."/>
        </authorList>
    </citation>
    <scope>NUCLEOTIDE SEQUENCE [LARGE SCALE GENOMIC DNA]</scope>
    <source>
        <strain>ATCC 43067 / DSM 2661 / JAL-1 / JCM 10045 / NBRC 100440</strain>
    </source>
</reference>
<reference key="2">
    <citation type="journal article" date="2013" name="Nat. Rev. Microbiol.">
        <title>Cyclic di-AMP: another second messenger enters the fray.</title>
        <authorList>
            <person name="Corrigan R.M."/>
            <person name="Gruendling A."/>
        </authorList>
    </citation>
    <scope>GENE NAME</scope>
</reference>
<reference key="3">
    <citation type="journal article" date="2015" name="J. Am. Chem. Soc.">
        <title>RNA-based fluorescent biosensors for live cell imaging of second messenger cyclic di-AMP.</title>
        <authorList>
            <person name="Kellenberger C.A."/>
            <person name="Chen C."/>
            <person name="Whiteley A.T."/>
            <person name="Portnoy D.A."/>
            <person name="Hammond M.C."/>
        </authorList>
    </citation>
    <scope>FUNCTION</scope>
    <scope>EXPRESSION IN E.COLI</scope>
    <source>
        <strain>ATCC 43067 / DSM 2661 / JAL-1 / JCM 10045 / NBRC 100440</strain>
    </source>
</reference>
<comment type="function">
    <text evidence="1 3">Diadenylate cyclase that catalyzes the condensation of 2 ATP molecules into cyclic di-AMP (c-di-AMP) (PubMed:25965978). c-di-AMP is a second messenger for intracellular signal transduction involved in the control of important regulatory processes such as osmoregulation (By similarity).</text>
</comment>
<comment type="catalytic activity">
    <reaction evidence="1">
        <text>2 ATP = 3',3'-c-di-AMP + 2 diphosphate</text>
        <dbReference type="Rhea" id="RHEA:35655"/>
        <dbReference type="ChEBI" id="CHEBI:30616"/>
        <dbReference type="ChEBI" id="CHEBI:33019"/>
        <dbReference type="ChEBI" id="CHEBI:71500"/>
        <dbReference type="EC" id="2.7.7.85"/>
    </reaction>
</comment>
<comment type="cofactor">
    <cofactor evidence="1">
        <name>Mn(2+)</name>
        <dbReference type="ChEBI" id="CHEBI:29035"/>
    </cofactor>
</comment>
<comment type="similarity">
    <text evidence="1">Belongs to the adenylate cyclase family. DacZ subfamily.</text>
</comment>
<keyword id="KW-0067">ATP-binding</keyword>
<keyword id="KW-0464">Manganese</keyword>
<keyword id="KW-0547">Nucleotide-binding</keyword>
<keyword id="KW-0548">Nucleotidyltransferase</keyword>
<keyword id="KW-1185">Reference proteome</keyword>
<keyword id="KW-0808">Transferase</keyword>
<name>DACZ_METJA</name>
<sequence length="309" mass="34380">MIAKYIIKHGLELAYDIKADAFMIFTETGKSYELLKSFLKKDEHSGIIKILDKISHKNVKIIVATPNQVTYKKISSENEENIYPIFIKHREDNRCMIISSGIVHALKMKILKENNKIVAVVGEPKTPGKLDTIMVVNVKEHVKTITLYELFETLDEKQKRTLKEIIKLAMEIGREGREGEYVGTIFVMGDTLNVMSMSKPLILNPFAGHNASIFDENVKGTIKELSSIDGAFIITDEGKVVSAGRFLEIKGDVNIPKGLGARHLAAASISKNTNAIAVTVSQSGGIVRVFKDGKIVFETDPRANILFFD</sequence>
<feature type="chain" id="PRO_0000107138" description="Diadenylate cyclase">
    <location>
        <begin position="1"/>
        <end position="309"/>
    </location>
</feature>
<feature type="domain" description="DAC" evidence="1">
    <location>
        <begin position="144"/>
        <end position="301"/>
    </location>
</feature>
<protein>
    <recommendedName>
        <fullName evidence="1">Diadenylate cyclase</fullName>
        <shortName evidence="1">DAC</shortName>
        <ecNumber evidence="1">2.7.7.85</ecNumber>
    </recommendedName>
    <alternativeName>
        <fullName evidence="1">Cyclic-di-AMP synthase</fullName>
        <shortName evidence="1">c-di-AMP synthase</shortName>
    </alternativeName>
    <alternativeName>
        <fullName evidence="2">Diadenylyl cyclase</fullName>
    </alternativeName>
</protein>
<gene>
    <name evidence="1 2" type="primary">dacZ</name>
    <name evidence="2" type="synonym">dacY</name>
    <name type="ordered locus">MJ1002</name>
</gene>
<proteinExistence type="inferred from homology"/>
<organism>
    <name type="scientific">Methanocaldococcus jannaschii (strain ATCC 43067 / DSM 2661 / JAL-1 / JCM 10045 / NBRC 100440)</name>
    <name type="common">Methanococcus jannaschii</name>
    <dbReference type="NCBI Taxonomy" id="243232"/>
    <lineage>
        <taxon>Archaea</taxon>
        <taxon>Methanobacteriati</taxon>
        <taxon>Methanobacteriota</taxon>
        <taxon>Methanomada group</taxon>
        <taxon>Methanococci</taxon>
        <taxon>Methanococcales</taxon>
        <taxon>Methanocaldococcaceae</taxon>
        <taxon>Methanocaldococcus</taxon>
    </lineage>
</organism>
<dbReference type="EC" id="2.7.7.85" evidence="1"/>
<dbReference type="EMBL" id="L77117">
    <property type="protein sequence ID" value="AAB99005.1"/>
    <property type="molecule type" value="Genomic_DNA"/>
</dbReference>
<dbReference type="PIR" id="A64425">
    <property type="entry name" value="A64425"/>
</dbReference>
<dbReference type="RefSeq" id="WP_010870515.1">
    <property type="nucleotide sequence ID" value="NC_000909.1"/>
</dbReference>
<dbReference type="SMR" id="Q58408"/>
<dbReference type="STRING" id="243232.MJ_1002"/>
<dbReference type="PaxDb" id="243232-MJ_1002"/>
<dbReference type="EnsemblBacteria" id="AAB99005">
    <property type="protein sequence ID" value="AAB99005"/>
    <property type="gene ID" value="MJ_1002"/>
</dbReference>
<dbReference type="GeneID" id="1451899"/>
<dbReference type="KEGG" id="mja:MJ_1002"/>
<dbReference type="eggNOG" id="arCOG04453">
    <property type="taxonomic scope" value="Archaea"/>
</dbReference>
<dbReference type="HOGENOM" id="CLU_063222_2_0_2"/>
<dbReference type="InParanoid" id="Q58408"/>
<dbReference type="OrthoDB" id="85944at2157"/>
<dbReference type="PhylomeDB" id="Q58408"/>
<dbReference type="Proteomes" id="UP000000805">
    <property type="component" value="Chromosome"/>
</dbReference>
<dbReference type="GO" id="GO:0004016">
    <property type="term" value="F:adenylate cyclase activity"/>
    <property type="evidence" value="ECO:0000318"/>
    <property type="project" value="GO_Central"/>
</dbReference>
<dbReference type="GO" id="GO:0005524">
    <property type="term" value="F:ATP binding"/>
    <property type="evidence" value="ECO:0007669"/>
    <property type="project" value="UniProtKB-UniRule"/>
</dbReference>
<dbReference type="GO" id="GO:0106408">
    <property type="term" value="F:diadenylate cyclase activity"/>
    <property type="evidence" value="ECO:0007669"/>
    <property type="project" value="UniProtKB-EC"/>
</dbReference>
<dbReference type="GO" id="GO:0030145">
    <property type="term" value="F:manganese ion binding"/>
    <property type="evidence" value="ECO:0007669"/>
    <property type="project" value="UniProtKB-UniRule"/>
</dbReference>
<dbReference type="Gene3D" id="3.40.1700.10">
    <property type="entry name" value="DNA integrity scanning protein, DisA, N-terminal domain"/>
    <property type="match status" value="1"/>
</dbReference>
<dbReference type="Gene3D" id="3.40.1380.20">
    <property type="entry name" value="Pyruvate kinase, C-terminal domain"/>
    <property type="match status" value="1"/>
</dbReference>
<dbReference type="HAMAP" id="MF_00840">
    <property type="entry name" value="DacZ"/>
    <property type="match status" value="1"/>
</dbReference>
<dbReference type="InterPro" id="IPR014499">
    <property type="entry name" value="DAC_DacZ"/>
</dbReference>
<dbReference type="InterPro" id="IPR050338">
    <property type="entry name" value="DisA"/>
</dbReference>
<dbReference type="InterPro" id="IPR036888">
    <property type="entry name" value="DNA_integrity_DisA_N_sf"/>
</dbReference>
<dbReference type="InterPro" id="IPR003390">
    <property type="entry name" value="DNA_integrity_scan_DisA_N"/>
</dbReference>
<dbReference type="InterPro" id="IPR015795">
    <property type="entry name" value="Pyrv_Knase_C"/>
</dbReference>
<dbReference type="InterPro" id="IPR036918">
    <property type="entry name" value="Pyrv_Knase_C_sf"/>
</dbReference>
<dbReference type="PANTHER" id="PTHR34185">
    <property type="entry name" value="DIADENYLATE CYCLASE"/>
    <property type="match status" value="1"/>
</dbReference>
<dbReference type="PANTHER" id="PTHR34185:SF1">
    <property type="entry name" value="DIADENYLATE CYCLASE"/>
    <property type="match status" value="1"/>
</dbReference>
<dbReference type="Pfam" id="PF02457">
    <property type="entry name" value="DAC"/>
    <property type="match status" value="1"/>
</dbReference>
<dbReference type="Pfam" id="PF02887">
    <property type="entry name" value="PK_C"/>
    <property type="match status" value="1"/>
</dbReference>
<dbReference type="PIRSF" id="PIRSF019073">
    <property type="entry name" value="UCP019073"/>
    <property type="match status" value="1"/>
</dbReference>
<dbReference type="SUPFAM" id="SSF52935">
    <property type="entry name" value="PK C-terminal domain-like"/>
    <property type="match status" value="1"/>
</dbReference>
<dbReference type="SUPFAM" id="SSF143597">
    <property type="entry name" value="YojJ-like"/>
    <property type="match status" value="1"/>
</dbReference>
<dbReference type="PROSITE" id="PS51794">
    <property type="entry name" value="DAC"/>
    <property type="match status" value="1"/>
</dbReference>
<evidence type="ECO:0000255" key="1">
    <source>
        <dbReference type="HAMAP-Rule" id="MF_00840"/>
    </source>
</evidence>
<evidence type="ECO:0000303" key="2">
    <source>
    </source>
</evidence>
<evidence type="ECO:0000305" key="3">
    <source>
    </source>
</evidence>
<accession>Q58408</accession>